<protein>
    <recommendedName>
        <fullName evidence="2">Septenin 2d</fullName>
    </recommendedName>
</protein>
<reference key="1">
    <citation type="journal article" date="2021" name="Rapid Commun. Mass Spectrom.">
        <title>Manual mass spectrometry de novo sequencing of the anionic host defense peptides of the Cuban Treefrog Osteopilus septentrionalis.</title>
        <authorList>
            <person name="Samgina T.Y."/>
            <person name="Tolpina M.D."/>
            <person name="Surin A.K."/>
            <person name="Kovalev S.V."/>
            <person name="Bosch R.A."/>
            <person name="Alonso I.P."/>
            <person name="Garcia F.A."/>
            <person name="Gonzalez Lopez L.J."/>
            <person name="Lebedev A.T."/>
        </authorList>
    </citation>
    <scope>PROTEIN SEQUENCE</scope>
    <scope>MASS SPECTROMETRY</scope>
</reference>
<proteinExistence type="evidence at protein level"/>
<organism>
    <name type="scientific">Osteopilus septentrionalis</name>
    <name type="common">Cuban treefrog</name>
    <dbReference type="NCBI Taxonomy" id="317373"/>
    <lineage>
        <taxon>Eukaryota</taxon>
        <taxon>Metazoa</taxon>
        <taxon>Chordata</taxon>
        <taxon>Craniata</taxon>
        <taxon>Vertebrata</taxon>
        <taxon>Euteleostomi</taxon>
        <taxon>Amphibia</taxon>
        <taxon>Batrachia</taxon>
        <taxon>Anura</taxon>
        <taxon>Neobatrachia</taxon>
        <taxon>Hyloidea</taxon>
        <taxon>Hylidae</taxon>
        <taxon>Hylinae</taxon>
        <taxon>Lophiohylini</taxon>
        <taxon>Osteopilus</taxon>
    </lineage>
</organism>
<comment type="function">
    <text evidence="2">May act as an antimicrobial peptide.</text>
</comment>
<comment type="subcellular location">
    <subcellularLocation>
        <location evidence="1">Secreted</location>
    </subcellularLocation>
</comment>
<comment type="tissue specificity">
    <text evidence="4">Expressed in skin glands.</text>
</comment>
<comment type="mass spectrometry"/>
<comment type="similarity">
    <text evidence="3">Belongs to the Frog skin active peptide (FSAP) family. Septenin subfamily.</text>
</comment>
<accession>C0HLX6</accession>
<sequence>IIDDTINGAITTADNIVGRIGII</sequence>
<dbReference type="GO" id="GO:0005576">
    <property type="term" value="C:extracellular region"/>
    <property type="evidence" value="ECO:0007669"/>
    <property type="project" value="UniProtKB-SubCell"/>
</dbReference>
<keyword id="KW-0903">Direct protein sequencing</keyword>
<keyword id="KW-0964">Secreted</keyword>
<feature type="chain" id="PRO_0000453949" description="Septenin 2d">
    <location>
        <begin position="1"/>
        <end position="23"/>
    </location>
</feature>
<feature type="unsure residue" description="L or I" evidence="1">
    <location>
        <position position="1"/>
    </location>
</feature>
<feature type="unsure residue" description="L or I" evidence="1">
    <location>
        <position position="2"/>
    </location>
</feature>
<feature type="unsure residue" description="L or I" evidence="1">
    <location>
        <position position="6"/>
    </location>
</feature>
<feature type="unsure residue" description="L or I" evidence="1">
    <location>
        <position position="10"/>
    </location>
</feature>
<feature type="unsure residue" description="L or I" evidence="1">
    <location>
        <position position="16"/>
    </location>
</feature>
<feature type="unsure residue" description="L or I" evidence="1">
    <location>
        <position position="20"/>
    </location>
</feature>
<feature type="unsure residue" description="L or I" evidence="1">
    <location>
        <position position="22"/>
    </location>
</feature>
<feature type="unsure residue" description="L or I" evidence="1">
    <location>
        <position position="23"/>
    </location>
</feature>
<name>SEP2D_OSTSE</name>
<evidence type="ECO:0000269" key="1">
    <source>
    </source>
</evidence>
<evidence type="ECO:0000303" key="2">
    <source>
    </source>
</evidence>
<evidence type="ECO:0000305" key="3"/>
<evidence type="ECO:0000305" key="4">
    <source>
    </source>
</evidence>